<feature type="chain" id="PRO_0000372928" description="Matrix protein 2">
    <location>
        <begin position="1"/>
        <end position="97"/>
    </location>
</feature>
<feature type="topological domain" description="Virion surface" evidence="1">
    <location>
        <begin position="1"/>
        <end position="22"/>
    </location>
</feature>
<feature type="transmembrane region" description="Helical; Signal-anchor for type III membrane protein" evidence="1">
    <location>
        <begin position="23"/>
        <end position="43"/>
    </location>
</feature>
<feature type="topological domain" description="Intravirion" evidence="1">
    <location>
        <begin position="44"/>
        <end position="97"/>
    </location>
</feature>
<feature type="region of interest" description="Disordered" evidence="2">
    <location>
        <begin position="59"/>
        <end position="88"/>
    </location>
</feature>
<feature type="compositionally biased region" description="Basic and acidic residues" evidence="2">
    <location>
        <begin position="71"/>
        <end position="80"/>
    </location>
</feature>
<feature type="site" description="Essential for channel activity, possibly by being protonated during channel activation, and by forming the channel gate and the selective filter" evidence="1">
    <location>
        <position position="37"/>
    </location>
</feature>
<feature type="site" description="Seems to be involved in pH gating" evidence="1">
    <location>
        <position position="41"/>
    </location>
</feature>
<feature type="modified residue" description="Phosphoserine; by host" evidence="1">
    <location>
        <position position="64"/>
    </location>
</feature>
<feature type="modified residue" description="Phosphoserine; by host" evidence="1">
    <location>
        <position position="93"/>
    </location>
</feature>
<feature type="lipid moiety-binding region" description="S-palmitoyl cysteine; by host" evidence="1">
    <location>
        <position position="50"/>
    </location>
</feature>
<feature type="glycosylation site" description="N-linked (GlcNAc...) asparagine; by host" evidence="1">
    <location>
        <position position="20"/>
    </location>
</feature>
<feature type="disulfide bond" description="Interchain (with C-17)" evidence="1">
    <location>
        <position position="17"/>
    </location>
</feature>
<feature type="disulfide bond" description="Interchain (with C-19)" evidence="1">
    <location>
        <position position="19"/>
    </location>
</feature>
<name>M2_I83A1</name>
<proteinExistence type="inferred from homology"/>
<reference key="1">
    <citation type="submission" date="2007-03" db="EMBL/GenBank/DDBJ databases">
        <title>The NIAID influenza genome sequencing project.</title>
        <authorList>
            <person name="Ghedin E."/>
            <person name="Spiro D."/>
            <person name="Miller N."/>
            <person name="Zaborsky J."/>
            <person name="Feldblyum T."/>
            <person name="Subbu V."/>
            <person name="Shumway M."/>
            <person name="Sparenborg J."/>
            <person name="Groveman L."/>
            <person name="Halpin R."/>
            <person name="Sitz J."/>
            <person name="Koo H."/>
            <person name="Salzberg S.L."/>
            <person name="Webster R.G."/>
            <person name="Hoffmann E."/>
            <person name="Krauss S."/>
            <person name="Naeve C."/>
            <person name="Bao Y."/>
            <person name="Bolotov P."/>
            <person name="Dernovoy D."/>
            <person name="Kiryutin B."/>
            <person name="Lipman D.J."/>
            <person name="Tatusova T."/>
        </authorList>
    </citation>
    <scope>NUCLEOTIDE SEQUENCE [GENOMIC RNA]</scope>
</reference>
<reference key="2">
    <citation type="submission" date="2007-03" db="EMBL/GenBank/DDBJ databases">
        <authorList>
            <consortium name="The NIAID Influenza Genome Sequencing Consortium"/>
        </authorList>
    </citation>
    <scope>NUCLEOTIDE SEQUENCE [GENOMIC RNA]</scope>
</reference>
<dbReference type="EMBL" id="CY020438">
    <property type="protein sequence ID" value="ABO38342.1"/>
    <property type="molecule type" value="Viral_cRNA"/>
</dbReference>
<dbReference type="BMRB" id="A4GCH6"/>
<dbReference type="SMR" id="A4GCH6"/>
<dbReference type="GlyCosmos" id="A4GCH6">
    <property type="glycosylation" value="1 site, No reported glycans"/>
</dbReference>
<dbReference type="Proteomes" id="UP000008582">
    <property type="component" value="Genome"/>
</dbReference>
<dbReference type="GO" id="GO:0020002">
    <property type="term" value="C:host cell plasma membrane"/>
    <property type="evidence" value="ECO:0007669"/>
    <property type="project" value="UniProtKB-SubCell"/>
</dbReference>
<dbReference type="GO" id="GO:0016020">
    <property type="term" value="C:membrane"/>
    <property type="evidence" value="ECO:0007669"/>
    <property type="project" value="UniProtKB-UniRule"/>
</dbReference>
<dbReference type="GO" id="GO:0055036">
    <property type="term" value="C:virion membrane"/>
    <property type="evidence" value="ECO:0007669"/>
    <property type="project" value="UniProtKB-SubCell"/>
</dbReference>
<dbReference type="GO" id="GO:0005216">
    <property type="term" value="F:monoatomic ion channel activity"/>
    <property type="evidence" value="ECO:0007669"/>
    <property type="project" value="UniProtKB-UniRule"/>
</dbReference>
<dbReference type="GO" id="GO:0015078">
    <property type="term" value="F:proton transmembrane transporter activity"/>
    <property type="evidence" value="ECO:0007669"/>
    <property type="project" value="UniProtKB-UniRule"/>
</dbReference>
<dbReference type="GO" id="GO:0051259">
    <property type="term" value="P:protein complex oligomerization"/>
    <property type="evidence" value="ECO:0007669"/>
    <property type="project" value="UniProtKB-UniRule"/>
</dbReference>
<dbReference type="GO" id="GO:0044694">
    <property type="term" value="P:symbiont genome entry into host cell via pore formation in plasma membrane"/>
    <property type="evidence" value="ECO:0007669"/>
    <property type="project" value="UniProtKB-UniRule"/>
</dbReference>
<dbReference type="GO" id="GO:0140321">
    <property type="term" value="P:symbiont-mediated suppression of host autophagy"/>
    <property type="evidence" value="ECO:0007669"/>
    <property type="project" value="UniProtKB-KW"/>
</dbReference>
<dbReference type="Gene3D" id="6.10.250.1640">
    <property type="match status" value="1"/>
</dbReference>
<dbReference type="HAMAP" id="MF_04069">
    <property type="entry name" value="INFV_M2"/>
    <property type="match status" value="1"/>
</dbReference>
<dbReference type="InterPro" id="IPR002089">
    <property type="entry name" value="Flu_M2"/>
</dbReference>
<dbReference type="Pfam" id="PF00599">
    <property type="entry name" value="Flu_M2"/>
    <property type="match status" value="1"/>
</dbReference>
<organism>
    <name type="scientific">Influenza A virus (strain A/Chile/1/1983 H1N1)</name>
    <dbReference type="NCBI Taxonomy" id="380985"/>
    <lineage>
        <taxon>Viruses</taxon>
        <taxon>Riboviria</taxon>
        <taxon>Orthornavirae</taxon>
        <taxon>Negarnaviricota</taxon>
        <taxon>Polyploviricotina</taxon>
        <taxon>Insthoviricetes</taxon>
        <taxon>Articulavirales</taxon>
        <taxon>Orthomyxoviridae</taxon>
        <taxon>Alphainfluenzavirus</taxon>
        <taxon>Alphainfluenzavirus influenzae</taxon>
        <taxon>Influenza A virus</taxon>
    </lineage>
</organism>
<keyword id="KW-0025">Alternative splicing</keyword>
<keyword id="KW-1015">Disulfide bond</keyword>
<keyword id="KW-0325">Glycoprotein</keyword>
<keyword id="KW-1032">Host cell membrane</keyword>
<keyword id="KW-1043">Host membrane</keyword>
<keyword id="KW-0945">Host-virus interaction</keyword>
<keyword id="KW-0375">Hydrogen ion transport</keyword>
<keyword id="KW-1083">Inhibition of host autophagy by virus</keyword>
<keyword id="KW-0407">Ion channel</keyword>
<keyword id="KW-0406">Ion transport</keyword>
<keyword id="KW-0449">Lipoprotein</keyword>
<keyword id="KW-0472">Membrane</keyword>
<keyword id="KW-0564">Palmitate</keyword>
<keyword id="KW-0597">Phosphoprotein</keyword>
<keyword id="KW-0735">Signal-anchor</keyword>
<keyword id="KW-0812">Transmembrane</keyword>
<keyword id="KW-1133">Transmembrane helix</keyword>
<keyword id="KW-0813">Transport</keyword>
<keyword id="KW-1182">Viral ion channel</keyword>
<keyword id="KW-0946">Virion</keyword>
<sequence>MSLLTEVETPIRNEWGCRCNDSSDPLVVAASIIGILHLILWILDRLFFKCIYRLFKHGLKRGPSTEGVPESMREEYREEQQNAVDADDGHFVSIELE</sequence>
<organismHost>
    <name type="scientific">Aves</name>
    <dbReference type="NCBI Taxonomy" id="8782"/>
</organismHost>
<organismHost>
    <name type="scientific">Homo sapiens</name>
    <name type="common">Human</name>
    <dbReference type="NCBI Taxonomy" id="9606"/>
</organismHost>
<organismHost>
    <name type="scientific">Sus scrofa</name>
    <name type="common">Pig</name>
    <dbReference type="NCBI Taxonomy" id="9823"/>
</organismHost>
<comment type="function">
    <text evidence="1">Forms a proton-selective ion channel that is necessary for the efficient release of the viral genome during virus entry. After attaching to the cell surface, the virion enters the cell by endocytosis. Acidification of the endosome triggers M2 ion channel activity. The influx of protons into virion interior is believed to disrupt interactions between the viral ribonucleoprotein (RNP), matrix protein 1 (M1), and lipid bilayers, thereby freeing the viral genome from interaction with viral proteins and enabling RNA segments to migrate to the host cell nucleus, where influenza virus RNA transcription and replication occur. Also plays a role in viral proteins secretory pathway. Elevates the intravesicular pH of normally acidic compartments, such as trans-Golgi network, preventing newly formed hemagglutinin from premature switching to the fusion-active conformation.</text>
</comment>
<comment type="activity regulation">
    <text>The M2 protein from most influenza A strains is inhibited by amantadine and rimantadine, resulting in viral uncoating incapacity. Emergence of amantadine-resistant variants is usually rapid.</text>
</comment>
<comment type="subunit">
    <text evidence="1">Homotetramer; composed of two disulfide-linked dimers held together by non-covalent interactions. May interact with matrix protein 1.</text>
</comment>
<comment type="subcellular location">
    <subcellularLocation>
        <location evidence="1">Virion membrane</location>
    </subcellularLocation>
    <subcellularLocation>
        <location evidence="1">Host apical cell membrane</location>
        <topology evidence="1">Single-pass type III membrane protein</topology>
    </subcellularLocation>
    <text evidence="1">Abundantly expressed at the apical plasma membrane in infected polarized epithelial cells, in close proximity to budding and assembled virions. Minor component of virions (only 16-20 molecules/virion).</text>
</comment>
<comment type="alternative products">
    <event type="alternative splicing"/>
    <isoform>
        <id>A4GCH6-1</id>
        <name>M2</name>
        <sequence type="displayed"/>
    </isoform>
    <isoform>
        <id>A4GCH7-1</id>
        <name>M1</name>
        <sequence type="external"/>
    </isoform>
    <text>Only the first 9 residues are shared by the 2 isoforms.</text>
</comment>
<comment type="domain">
    <text evidence="1">Cytoplasmic tail plays an important role in virion assembly and morphogenesis.</text>
</comment>
<comment type="miscellaneous">
    <text evidence="1">When the channel is activated, one or more imidazole moieties of His-37 probably become bi-protonated.</text>
</comment>
<comment type="similarity">
    <text evidence="1">Belongs to the influenza viruses matrix protein M2 family.</text>
</comment>
<evidence type="ECO:0000255" key="1">
    <source>
        <dbReference type="HAMAP-Rule" id="MF_04069"/>
    </source>
</evidence>
<evidence type="ECO:0000256" key="2">
    <source>
        <dbReference type="SAM" id="MobiDB-lite"/>
    </source>
</evidence>
<protein>
    <recommendedName>
        <fullName evidence="1">Matrix protein 2</fullName>
    </recommendedName>
    <alternativeName>
        <fullName evidence="1">Proton channel protein M2</fullName>
    </alternativeName>
</protein>
<gene>
    <name evidence="1" type="primary">M</name>
    <name type="synonym">M2</name>
</gene>
<accession>A4GCH6</accession>